<gene>
    <name type="primary">nas-23</name>
    <name type="ORF">R10H1.5</name>
</gene>
<accession>Q7Z0M7</accession>
<feature type="signal peptide" evidence="4">
    <location>
        <begin position="1"/>
        <end position="16"/>
    </location>
</feature>
<feature type="propeptide" id="PRO_0000442670" evidence="3">
    <location>
        <begin position="17"/>
        <end position="111"/>
    </location>
</feature>
<feature type="chain" id="PRO_0000028927" description="Zinc metalloproteinase nas-23">
    <location>
        <begin position="112"/>
        <end position="537"/>
    </location>
</feature>
<feature type="domain" description="Peptidase M12A" evidence="6">
    <location>
        <begin position="116"/>
        <end position="311"/>
    </location>
</feature>
<feature type="domain" description="EGF-like">
    <location>
        <begin position="306"/>
        <end position="346"/>
    </location>
</feature>
<feature type="domain" description="CUB" evidence="5">
    <location>
        <begin position="356"/>
        <end position="471"/>
    </location>
</feature>
<feature type="active site" evidence="6">
    <location>
        <position position="208"/>
    </location>
</feature>
<feature type="binding site" evidence="6">
    <location>
        <position position="207"/>
    </location>
    <ligand>
        <name>Zn(2+)</name>
        <dbReference type="ChEBI" id="CHEBI:29105"/>
        <note>catalytic</note>
    </ligand>
</feature>
<feature type="binding site" evidence="6">
    <location>
        <position position="211"/>
    </location>
    <ligand>
        <name>Zn(2+)</name>
        <dbReference type="ChEBI" id="CHEBI:29105"/>
        <note>catalytic</note>
    </ligand>
</feature>
<feature type="binding site" evidence="6">
    <location>
        <position position="217"/>
    </location>
    <ligand>
        <name>Zn(2+)</name>
        <dbReference type="ChEBI" id="CHEBI:29105"/>
        <note>catalytic</note>
    </ligand>
</feature>
<feature type="glycosylation site" description="N-linked (GlcNAc...) asparagine" evidence="4">
    <location>
        <position position="77"/>
    </location>
</feature>
<feature type="glycosylation site" description="N-linked (GlcNAc...) asparagine" evidence="4">
    <location>
        <position position="481"/>
    </location>
</feature>
<feature type="disulfide bond" evidence="6">
    <location>
        <begin position="156"/>
        <end position="310"/>
    </location>
</feature>
<feature type="disulfide bond" evidence="6">
    <location>
        <begin position="178"/>
        <end position="199"/>
    </location>
</feature>
<feature type="disulfide bond" evidence="5">
    <location>
        <begin position="314"/>
        <end position="334"/>
    </location>
</feature>
<feature type="disulfide bond" evidence="5">
    <location>
        <begin position="336"/>
        <end position="345"/>
    </location>
</feature>
<feature type="disulfide bond" evidence="5">
    <location>
        <begin position="356"/>
        <end position="385"/>
    </location>
</feature>
<feature type="disulfide bond" evidence="5">
    <location>
        <begin position="412"/>
        <end position="433"/>
    </location>
</feature>
<comment type="function">
    <text evidence="2">Metalloprotease.</text>
</comment>
<comment type="cofactor">
    <cofactor evidence="6">
        <name>Zn(2+)</name>
        <dbReference type="ChEBI" id="CHEBI:29105"/>
    </cofactor>
    <text evidence="6">Binds 1 zinc ion per subunit.</text>
</comment>
<comment type="subcellular location">
    <subcellularLocation>
        <location evidence="8">Secreted</location>
    </subcellularLocation>
</comment>
<comment type="tissue specificity">
    <text evidence="7">Expressed in the hypodermis, rectum and to a lesser extent in pharyngeal muscles and intestine.</text>
</comment>
<keyword id="KW-0165">Cleavage on pair of basic residues</keyword>
<keyword id="KW-1015">Disulfide bond</keyword>
<keyword id="KW-0245">EGF-like domain</keyword>
<keyword id="KW-0325">Glycoprotein</keyword>
<keyword id="KW-0378">Hydrolase</keyword>
<keyword id="KW-0479">Metal-binding</keyword>
<keyword id="KW-0482">Metalloprotease</keyword>
<keyword id="KW-0645">Protease</keyword>
<keyword id="KW-1185">Reference proteome</keyword>
<keyword id="KW-0964">Secreted</keyword>
<keyword id="KW-0732">Signal</keyword>
<keyword id="KW-0862">Zinc</keyword>
<keyword id="KW-0865">Zymogen</keyword>
<sequence>MRFLILVLAGSIGIYGVNLPKIPKLSDLVNPFQQFKLKDILSTLTALDTPDIAADSAGVSLPKHEYTDRLSSISDLNRSKRDLLFQGDIHLSFEHLSNIVREQLDHSRTKRTAFRNAMYPKTIWLPNVPFELHGSLSAKSRSSLVAAMAFWEKHTCVAFKKRTSEKVYLLMSGQEEGCWSTVGRDEAQGAQILNIGTGCEMFGITSHEIAHALGLFHEQSRYDRDNYVQIVKSRIAQTNFYDFAVVGKKNMETYGQKYDIGSVMHYRPTEFSLDGGNSIIAKDVNMQNTMGQFRGPSFIDVAKINRHYNCEKNCKNKITCLNGGYQHPKNCKICVCPPGYGGSDCKGIEASSPAKCTGVLVAGETQRKFTANIKPNKNAKGIRKCNYHIEAPPGKRIVIIVDSVIGNCVQGCYEEGVELKMYEDKTVTGARFCCKLQKPQTLISQGNTVPLMLVAGKAQAFVQLRYSTVDGPQNRSPKDGNATSIGVNPFLLEKYQDNSIDSEAIRKEYHIQSDNVNQEDFETLVRSEFIDENTADI</sequence>
<organism>
    <name type="scientific">Caenorhabditis elegans</name>
    <dbReference type="NCBI Taxonomy" id="6239"/>
    <lineage>
        <taxon>Eukaryota</taxon>
        <taxon>Metazoa</taxon>
        <taxon>Ecdysozoa</taxon>
        <taxon>Nematoda</taxon>
        <taxon>Chromadorea</taxon>
        <taxon>Rhabditida</taxon>
        <taxon>Rhabditina</taxon>
        <taxon>Rhabditomorpha</taxon>
        <taxon>Rhabditoidea</taxon>
        <taxon>Rhabditidae</taxon>
        <taxon>Peloderinae</taxon>
        <taxon>Caenorhabditis</taxon>
    </lineage>
</organism>
<proteinExistence type="evidence at transcript level"/>
<protein>
    <recommendedName>
        <fullName>Zinc metalloproteinase nas-23</fullName>
        <ecNumber evidence="1">3.4.24.-</ecNumber>
    </recommendedName>
    <alternativeName>
        <fullName>Nematode astacin 23</fullName>
    </alternativeName>
</protein>
<reference key="1">
    <citation type="journal article" date="1998" name="Science">
        <title>Genome sequence of the nematode C. elegans: a platform for investigating biology.</title>
        <authorList>
            <consortium name="The C. elegans sequencing consortium"/>
        </authorList>
    </citation>
    <scope>NUCLEOTIDE SEQUENCE [LARGE SCALE GENOMIC DNA]</scope>
    <source>
        <strain>Bristol N2</strain>
    </source>
</reference>
<reference key="2">
    <citation type="journal article" date="2003" name="Eur. J. Biochem.">
        <title>The astacin protein family in Caenorhabditis elegans.</title>
        <authorList>
            <person name="Moehrlen F."/>
            <person name="Hutter H."/>
            <person name="Zwilling R."/>
        </authorList>
    </citation>
    <scope>NUCLEOTIDE SEQUENCE [MRNA] OF 170-228</scope>
    <scope>NOMENCLATURE</scope>
    <source>
        <strain>Bristol N2</strain>
    </source>
</reference>
<reference key="3">
    <citation type="journal article" date="2010" name="BMC Dev. Biol.">
        <title>Characterization of the astacin family of metalloproteases in C. elegans.</title>
        <authorList>
            <person name="Park J.O."/>
            <person name="Pan J."/>
            <person name="Moehrlen F."/>
            <person name="Schupp M.O."/>
            <person name="Johnsen R."/>
            <person name="Baillie D.L."/>
            <person name="Zapf R."/>
            <person name="Moerman D.G."/>
            <person name="Hutter H."/>
        </authorList>
    </citation>
    <scope>TISSUE SPECIFICITY</scope>
</reference>
<name>NAS23_CAEEL</name>
<evidence type="ECO:0000250" key="1">
    <source>
        <dbReference type="UniProtKB" id="A8Q2D1"/>
    </source>
</evidence>
<evidence type="ECO:0000250" key="2">
    <source>
        <dbReference type="UniProtKB" id="P07584"/>
    </source>
</evidence>
<evidence type="ECO:0000250" key="3">
    <source>
        <dbReference type="UniProtKB" id="P13497"/>
    </source>
</evidence>
<evidence type="ECO:0000255" key="4"/>
<evidence type="ECO:0000255" key="5">
    <source>
        <dbReference type="PROSITE-ProRule" id="PRU00059"/>
    </source>
</evidence>
<evidence type="ECO:0000255" key="6">
    <source>
        <dbReference type="PROSITE-ProRule" id="PRU01211"/>
    </source>
</evidence>
<evidence type="ECO:0000269" key="7">
    <source>
    </source>
</evidence>
<evidence type="ECO:0000305" key="8"/>
<dbReference type="EC" id="3.4.24.-" evidence="1"/>
<dbReference type="EMBL" id="FO080701">
    <property type="protein sequence ID" value="CCD65953.1"/>
    <property type="molecule type" value="Genomic_DNA"/>
</dbReference>
<dbReference type="EMBL" id="AJ561213">
    <property type="protein sequence ID" value="CAD99214.1"/>
    <property type="molecule type" value="mRNA"/>
</dbReference>
<dbReference type="RefSeq" id="NP_001022281.1">
    <property type="nucleotide sequence ID" value="NM_001027110.3"/>
</dbReference>
<dbReference type="SMR" id="Q7Z0M7"/>
<dbReference type="BioGRID" id="533310">
    <property type="interactions" value="1"/>
</dbReference>
<dbReference type="FunCoup" id="Q7Z0M7">
    <property type="interactions" value="2"/>
</dbReference>
<dbReference type="MEROPS" id="M12.A37"/>
<dbReference type="GlyCosmos" id="Q7Z0M7">
    <property type="glycosylation" value="2 sites, No reported glycans"/>
</dbReference>
<dbReference type="PaxDb" id="6239-R10H1.5"/>
<dbReference type="PeptideAtlas" id="Q7Z0M7"/>
<dbReference type="EnsemblMetazoa" id="R10H1.5.1">
    <property type="protein sequence ID" value="R10H1.5.1"/>
    <property type="gene ID" value="WBGene00003542"/>
</dbReference>
<dbReference type="GeneID" id="3565992"/>
<dbReference type="KEGG" id="cel:CELE_R10H1.5"/>
<dbReference type="AGR" id="WB:WBGene00003542"/>
<dbReference type="CTD" id="3565992"/>
<dbReference type="WormBase" id="R10H1.5">
    <property type="protein sequence ID" value="CE38212"/>
    <property type="gene ID" value="WBGene00003542"/>
    <property type="gene designation" value="nas-23"/>
</dbReference>
<dbReference type="eggNOG" id="KOG3714">
    <property type="taxonomic scope" value="Eukaryota"/>
</dbReference>
<dbReference type="GeneTree" id="ENSGT00940000169152"/>
<dbReference type="HOGENOM" id="CLU_017286_1_5_1"/>
<dbReference type="InParanoid" id="Q7Z0M7"/>
<dbReference type="OMA" id="VAKINRH"/>
<dbReference type="OrthoDB" id="291007at2759"/>
<dbReference type="PhylomeDB" id="Q7Z0M7"/>
<dbReference type="PRO" id="PR:Q7Z0M7"/>
<dbReference type="Proteomes" id="UP000001940">
    <property type="component" value="Chromosome II"/>
</dbReference>
<dbReference type="Bgee" id="WBGene00003542">
    <property type="expression patterns" value="Expressed in larva"/>
</dbReference>
<dbReference type="GO" id="GO:0005576">
    <property type="term" value="C:extracellular region"/>
    <property type="evidence" value="ECO:0007669"/>
    <property type="project" value="UniProtKB-SubCell"/>
</dbReference>
<dbReference type="GO" id="GO:0004222">
    <property type="term" value="F:metalloendopeptidase activity"/>
    <property type="evidence" value="ECO:0000318"/>
    <property type="project" value="GO_Central"/>
</dbReference>
<dbReference type="GO" id="GO:0008270">
    <property type="term" value="F:zinc ion binding"/>
    <property type="evidence" value="ECO:0007669"/>
    <property type="project" value="InterPro"/>
</dbReference>
<dbReference type="GO" id="GO:0006508">
    <property type="term" value="P:proteolysis"/>
    <property type="evidence" value="ECO:0007669"/>
    <property type="project" value="UniProtKB-KW"/>
</dbReference>
<dbReference type="CDD" id="cd00054">
    <property type="entry name" value="EGF_CA"/>
    <property type="match status" value="1"/>
</dbReference>
<dbReference type="CDD" id="cd04280">
    <property type="entry name" value="ZnMc_astacin_like"/>
    <property type="match status" value="1"/>
</dbReference>
<dbReference type="FunFam" id="3.40.390.10:FF:000073">
    <property type="entry name" value="Zinc metalloproteinase"/>
    <property type="match status" value="1"/>
</dbReference>
<dbReference type="Gene3D" id="3.40.390.10">
    <property type="entry name" value="Collagenase (Catalytic Domain)"/>
    <property type="match status" value="1"/>
</dbReference>
<dbReference type="Gene3D" id="2.60.120.290">
    <property type="entry name" value="Spermadhesin, CUB domain"/>
    <property type="match status" value="1"/>
</dbReference>
<dbReference type="InterPro" id="IPR034035">
    <property type="entry name" value="Astacin-like_dom"/>
</dbReference>
<dbReference type="InterPro" id="IPR000859">
    <property type="entry name" value="CUB_dom"/>
</dbReference>
<dbReference type="InterPro" id="IPR000742">
    <property type="entry name" value="EGF-like_dom"/>
</dbReference>
<dbReference type="InterPro" id="IPR024079">
    <property type="entry name" value="MetalloPept_cat_dom_sf"/>
</dbReference>
<dbReference type="InterPro" id="IPR001506">
    <property type="entry name" value="Peptidase_M12A"/>
</dbReference>
<dbReference type="InterPro" id="IPR006026">
    <property type="entry name" value="Peptidase_Metallo"/>
</dbReference>
<dbReference type="InterPro" id="IPR035914">
    <property type="entry name" value="Sperma_CUB_dom_sf"/>
</dbReference>
<dbReference type="PANTHER" id="PTHR10127">
    <property type="entry name" value="DISCOIDIN, CUB, EGF, LAMININ , AND ZINC METALLOPROTEASE DOMAIN CONTAINING"/>
    <property type="match status" value="1"/>
</dbReference>
<dbReference type="PANTHER" id="PTHR10127:SF825">
    <property type="entry name" value="ZINC METALLOPROTEINASE NAS-23"/>
    <property type="match status" value="1"/>
</dbReference>
<dbReference type="Pfam" id="PF01400">
    <property type="entry name" value="Astacin"/>
    <property type="match status" value="1"/>
</dbReference>
<dbReference type="PRINTS" id="PR00480">
    <property type="entry name" value="ASTACIN"/>
</dbReference>
<dbReference type="SMART" id="SM00042">
    <property type="entry name" value="CUB"/>
    <property type="match status" value="1"/>
</dbReference>
<dbReference type="SMART" id="SM00235">
    <property type="entry name" value="ZnMc"/>
    <property type="match status" value="1"/>
</dbReference>
<dbReference type="SUPFAM" id="SSF55486">
    <property type="entry name" value="Metalloproteases ('zincins'), catalytic domain"/>
    <property type="match status" value="1"/>
</dbReference>
<dbReference type="SUPFAM" id="SSF49854">
    <property type="entry name" value="Spermadhesin, CUB domain"/>
    <property type="match status" value="1"/>
</dbReference>
<dbReference type="PROSITE" id="PS51864">
    <property type="entry name" value="ASTACIN"/>
    <property type="match status" value="1"/>
</dbReference>
<dbReference type="PROSITE" id="PS01180">
    <property type="entry name" value="CUB"/>
    <property type="match status" value="1"/>
</dbReference>
<dbReference type="PROSITE" id="PS00022">
    <property type="entry name" value="EGF_1"/>
    <property type="match status" value="1"/>
</dbReference>
<dbReference type="PROSITE" id="PS01186">
    <property type="entry name" value="EGF_2"/>
    <property type="match status" value="1"/>
</dbReference>
<dbReference type="PROSITE" id="PS00142">
    <property type="entry name" value="ZINC_PROTEASE"/>
    <property type="match status" value="1"/>
</dbReference>